<reference key="1">
    <citation type="journal article" date="2004" name="Nucleic Acids Res.">
        <title>The genome sequence of Bacillus cereus ATCC 10987 reveals metabolic adaptations and a large plasmid related to Bacillus anthracis pXO1.</title>
        <authorList>
            <person name="Rasko D.A."/>
            <person name="Ravel J."/>
            <person name="Oekstad O.A."/>
            <person name="Helgason E."/>
            <person name="Cer R.Z."/>
            <person name="Jiang L."/>
            <person name="Shores K.A."/>
            <person name="Fouts D.E."/>
            <person name="Tourasse N.J."/>
            <person name="Angiuoli S.V."/>
            <person name="Kolonay J.F."/>
            <person name="Nelson W.C."/>
            <person name="Kolstoe A.-B."/>
            <person name="Fraser C.M."/>
            <person name="Read T.D."/>
        </authorList>
    </citation>
    <scope>NUCLEOTIDE SEQUENCE [LARGE SCALE GENOMIC DNA]</scope>
    <source>
        <strain>ATCC 10987 / NRS 248</strain>
    </source>
</reference>
<accession>Q72WX0</accession>
<protein>
    <recommendedName>
        <fullName evidence="1">Ribosomal RNA large subunit methyltransferase H</fullName>
        <ecNumber evidence="1">2.1.1.177</ecNumber>
    </recommendedName>
    <alternativeName>
        <fullName evidence="1">23S rRNA (pseudouridine1915-N3)-methyltransferase</fullName>
    </alternativeName>
    <alternativeName>
        <fullName evidence="1">23S rRNA m3Psi1915 methyltransferase</fullName>
    </alternativeName>
    <alternativeName>
        <fullName evidence="1">rRNA (pseudouridine-N3-)-methyltransferase RlmH</fullName>
    </alternativeName>
</protein>
<evidence type="ECO:0000255" key="1">
    <source>
        <dbReference type="HAMAP-Rule" id="MF_00658"/>
    </source>
</evidence>
<evidence type="ECO:0000305" key="2"/>
<sequence length="159" mass="17909">MNISIISIGKLKEKYLKQGIAEYLKRLSAYAKVEVIELPDEKAPENLSEAEMLIVKEKEGIRILDKISDDTHVIALAIEGKQKSSEEFAVSLDRLATYGKSKVAFVIGGSLGLSSEVIKRSNESLSFSKMTLPHQLMRLVLLEQVYRAFRINRGEPYHK</sequence>
<feature type="chain" id="PRO_0000198081" description="Ribosomal RNA large subunit methyltransferase H">
    <location>
        <begin position="1"/>
        <end position="159"/>
    </location>
</feature>
<feature type="binding site" evidence="1">
    <location>
        <position position="76"/>
    </location>
    <ligand>
        <name>S-adenosyl-L-methionine</name>
        <dbReference type="ChEBI" id="CHEBI:59789"/>
    </ligand>
</feature>
<feature type="binding site" evidence="1">
    <location>
        <position position="108"/>
    </location>
    <ligand>
        <name>S-adenosyl-L-methionine</name>
        <dbReference type="ChEBI" id="CHEBI:59789"/>
    </ligand>
</feature>
<feature type="binding site" evidence="1">
    <location>
        <begin position="127"/>
        <end position="132"/>
    </location>
    <ligand>
        <name>S-adenosyl-L-methionine</name>
        <dbReference type="ChEBI" id="CHEBI:59789"/>
    </ligand>
</feature>
<organism>
    <name type="scientific">Bacillus cereus (strain ATCC 10987 / NRS 248)</name>
    <dbReference type="NCBI Taxonomy" id="222523"/>
    <lineage>
        <taxon>Bacteria</taxon>
        <taxon>Bacillati</taxon>
        <taxon>Bacillota</taxon>
        <taxon>Bacilli</taxon>
        <taxon>Bacillales</taxon>
        <taxon>Bacillaceae</taxon>
        <taxon>Bacillus</taxon>
        <taxon>Bacillus cereus group</taxon>
    </lineage>
</organism>
<dbReference type="EC" id="2.1.1.177" evidence="1"/>
<dbReference type="EMBL" id="AE017194">
    <property type="protein sequence ID" value="AAS44508.1"/>
    <property type="status" value="ALT_INIT"/>
    <property type="molecule type" value="Genomic_DNA"/>
</dbReference>
<dbReference type="SMR" id="Q72WX0"/>
<dbReference type="KEGG" id="bca:BCE_5608"/>
<dbReference type="HOGENOM" id="CLU_100552_0_0_9"/>
<dbReference type="Proteomes" id="UP000002527">
    <property type="component" value="Chromosome"/>
</dbReference>
<dbReference type="GO" id="GO:0005737">
    <property type="term" value="C:cytoplasm"/>
    <property type="evidence" value="ECO:0007669"/>
    <property type="project" value="UniProtKB-SubCell"/>
</dbReference>
<dbReference type="GO" id="GO:0070038">
    <property type="term" value="F:rRNA (pseudouridine-N3-)-methyltransferase activity"/>
    <property type="evidence" value="ECO:0007669"/>
    <property type="project" value="UniProtKB-UniRule"/>
</dbReference>
<dbReference type="CDD" id="cd18081">
    <property type="entry name" value="RlmH-like"/>
    <property type="match status" value="1"/>
</dbReference>
<dbReference type="Gene3D" id="3.40.1280.10">
    <property type="match status" value="1"/>
</dbReference>
<dbReference type="HAMAP" id="MF_00658">
    <property type="entry name" value="23SrRNA_methyltr_H"/>
    <property type="match status" value="1"/>
</dbReference>
<dbReference type="InterPro" id="IPR029028">
    <property type="entry name" value="Alpha/beta_knot_MTases"/>
</dbReference>
<dbReference type="InterPro" id="IPR003742">
    <property type="entry name" value="RlmH-like"/>
</dbReference>
<dbReference type="InterPro" id="IPR029026">
    <property type="entry name" value="tRNA_m1G_MTases_N"/>
</dbReference>
<dbReference type="NCBIfam" id="NF000985">
    <property type="entry name" value="PRK00103.1-3"/>
    <property type="match status" value="1"/>
</dbReference>
<dbReference type="NCBIfam" id="TIGR00246">
    <property type="entry name" value="tRNA_RlmH_YbeA"/>
    <property type="match status" value="1"/>
</dbReference>
<dbReference type="PANTHER" id="PTHR33603">
    <property type="entry name" value="METHYLTRANSFERASE"/>
    <property type="match status" value="1"/>
</dbReference>
<dbReference type="PANTHER" id="PTHR33603:SF1">
    <property type="entry name" value="RIBOSOMAL RNA LARGE SUBUNIT METHYLTRANSFERASE H"/>
    <property type="match status" value="1"/>
</dbReference>
<dbReference type="Pfam" id="PF02590">
    <property type="entry name" value="SPOUT_MTase"/>
    <property type="match status" value="1"/>
</dbReference>
<dbReference type="PIRSF" id="PIRSF004505">
    <property type="entry name" value="MT_bac"/>
    <property type="match status" value="1"/>
</dbReference>
<dbReference type="SUPFAM" id="SSF75217">
    <property type="entry name" value="alpha/beta knot"/>
    <property type="match status" value="1"/>
</dbReference>
<gene>
    <name evidence="1" type="primary">rlmH</name>
    <name type="ordered locus">BCE_5608</name>
</gene>
<name>RLMH_BACC1</name>
<comment type="function">
    <text evidence="1">Specifically methylates the pseudouridine at position 1915 (m3Psi1915) in 23S rRNA.</text>
</comment>
<comment type="catalytic activity">
    <reaction evidence="1">
        <text>pseudouridine(1915) in 23S rRNA + S-adenosyl-L-methionine = N(3)-methylpseudouridine(1915) in 23S rRNA + S-adenosyl-L-homocysteine + H(+)</text>
        <dbReference type="Rhea" id="RHEA:42752"/>
        <dbReference type="Rhea" id="RHEA-COMP:10221"/>
        <dbReference type="Rhea" id="RHEA-COMP:10222"/>
        <dbReference type="ChEBI" id="CHEBI:15378"/>
        <dbReference type="ChEBI" id="CHEBI:57856"/>
        <dbReference type="ChEBI" id="CHEBI:59789"/>
        <dbReference type="ChEBI" id="CHEBI:65314"/>
        <dbReference type="ChEBI" id="CHEBI:74486"/>
        <dbReference type="EC" id="2.1.1.177"/>
    </reaction>
</comment>
<comment type="subunit">
    <text evidence="1">Homodimer.</text>
</comment>
<comment type="subcellular location">
    <subcellularLocation>
        <location evidence="1">Cytoplasm</location>
    </subcellularLocation>
</comment>
<comment type="similarity">
    <text evidence="1">Belongs to the RNA methyltransferase RlmH family.</text>
</comment>
<comment type="sequence caution" evidence="2">
    <conflict type="erroneous initiation">
        <sequence resource="EMBL-CDS" id="AAS44508"/>
    </conflict>
</comment>
<keyword id="KW-0963">Cytoplasm</keyword>
<keyword id="KW-0489">Methyltransferase</keyword>
<keyword id="KW-0698">rRNA processing</keyword>
<keyword id="KW-0949">S-adenosyl-L-methionine</keyword>
<keyword id="KW-0808">Transferase</keyword>
<proteinExistence type="inferred from homology"/>